<gene>
    <name evidence="1" type="primary">tgt</name>
    <name type="ordered locus">SUB1711</name>
</gene>
<keyword id="KW-0328">Glycosyltransferase</keyword>
<keyword id="KW-0479">Metal-binding</keyword>
<keyword id="KW-0671">Queuosine biosynthesis</keyword>
<keyword id="KW-1185">Reference proteome</keyword>
<keyword id="KW-0808">Transferase</keyword>
<keyword id="KW-0819">tRNA processing</keyword>
<keyword id="KW-0862">Zinc</keyword>
<name>TGT_STRU0</name>
<protein>
    <recommendedName>
        <fullName evidence="1">Queuine tRNA-ribosyltransferase</fullName>
        <ecNumber evidence="1">2.4.2.29</ecNumber>
    </recommendedName>
    <alternativeName>
        <fullName evidence="1">Guanine insertion enzyme</fullName>
    </alternativeName>
    <alternativeName>
        <fullName evidence="1">tRNA-guanine transglycosylase</fullName>
    </alternativeName>
</protein>
<dbReference type="EC" id="2.4.2.29" evidence="1"/>
<dbReference type="EMBL" id="AM946015">
    <property type="protein sequence ID" value="CAR43634.1"/>
    <property type="molecule type" value="Genomic_DNA"/>
</dbReference>
<dbReference type="RefSeq" id="WP_015912004.1">
    <property type="nucleotide sequence ID" value="NC_012004.1"/>
</dbReference>
<dbReference type="SMR" id="B9DVZ9"/>
<dbReference type="STRING" id="218495.SUB1711"/>
<dbReference type="KEGG" id="sub:SUB1711"/>
<dbReference type="eggNOG" id="COG0343">
    <property type="taxonomic scope" value="Bacteria"/>
</dbReference>
<dbReference type="HOGENOM" id="CLU_022060_0_1_9"/>
<dbReference type="OrthoDB" id="9805417at2"/>
<dbReference type="UniPathway" id="UPA00392"/>
<dbReference type="Proteomes" id="UP000000449">
    <property type="component" value="Chromosome"/>
</dbReference>
<dbReference type="GO" id="GO:0005829">
    <property type="term" value="C:cytosol"/>
    <property type="evidence" value="ECO:0007669"/>
    <property type="project" value="TreeGrafter"/>
</dbReference>
<dbReference type="GO" id="GO:0046872">
    <property type="term" value="F:metal ion binding"/>
    <property type="evidence" value="ECO:0007669"/>
    <property type="project" value="UniProtKB-KW"/>
</dbReference>
<dbReference type="GO" id="GO:0008479">
    <property type="term" value="F:tRNA-guanosine(34) queuine transglycosylase activity"/>
    <property type="evidence" value="ECO:0007669"/>
    <property type="project" value="UniProtKB-UniRule"/>
</dbReference>
<dbReference type="GO" id="GO:0008616">
    <property type="term" value="P:queuosine biosynthetic process"/>
    <property type="evidence" value="ECO:0007669"/>
    <property type="project" value="UniProtKB-UniRule"/>
</dbReference>
<dbReference type="GO" id="GO:0002099">
    <property type="term" value="P:tRNA wobble guanine modification"/>
    <property type="evidence" value="ECO:0007669"/>
    <property type="project" value="TreeGrafter"/>
</dbReference>
<dbReference type="GO" id="GO:0101030">
    <property type="term" value="P:tRNA-guanine transglycosylation"/>
    <property type="evidence" value="ECO:0007669"/>
    <property type="project" value="InterPro"/>
</dbReference>
<dbReference type="FunFam" id="3.20.20.105:FF:000001">
    <property type="entry name" value="Queuine tRNA-ribosyltransferase"/>
    <property type="match status" value="1"/>
</dbReference>
<dbReference type="Gene3D" id="3.20.20.105">
    <property type="entry name" value="Queuine tRNA-ribosyltransferase-like"/>
    <property type="match status" value="1"/>
</dbReference>
<dbReference type="HAMAP" id="MF_00168">
    <property type="entry name" value="Q_tRNA_Tgt"/>
    <property type="match status" value="1"/>
</dbReference>
<dbReference type="InterPro" id="IPR050076">
    <property type="entry name" value="ArchSynthase1/Queuine_TRR"/>
</dbReference>
<dbReference type="InterPro" id="IPR004803">
    <property type="entry name" value="TGT"/>
</dbReference>
<dbReference type="InterPro" id="IPR036511">
    <property type="entry name" value="TGT-like_sf"/>
</dbReference>
<dbReference type="InterPro" id="IPR002616">
    <property type="entry name" value="tRNA_ribo_trans-like"/>
</dbReference>
<dbReference type="NCBIfam" id="TIGR00430">
    <property type="entry name" value="Q_tRNA_tgt"/>
    <property type="match status" value="1"/>
</dbReference>
<dbReference type="NCBIfam" id="TIGR00449">
    <property type="entry name" value="tgt_general"/>
    <property type="match status" value="1"/>
</dbReference>
<dbReference type="PANTHER" id="PTHR46499">
    <property type="entry name" value="QUEUINE TRNA-RIBOSYLTRANSFERASE"/>
    <property type="match status" value="1"/>
</dbReference>
<dbReference type="PANTHER" id="PTHR46499:SF1">
    <property type="entry name" value="QUEUINE TRNA-RIBOSYLTRANSFERASE"/>
    <property type="match status" value="1"/>
</dbReference>
<dbReference type="Pfam" id="PF01702">
    <property type="entry name" value="TGT"/>
    <property type="match status" value="1"/>
</dbReference>
<dbReference type="SUPFAM" id="SSF51713">
    <property type="entry name" value="tRNA-guanine transglycosylase"/>
    <property type="match status" value="1"/>
</dbReference>
<evidence type="ECO:0000255" key="1">
    <source>
        <dbReference type="HAMAP-Rule" id="MF_00168"/>
    </source>
</evidence>
<proteinExistence type="inferred from homology"/>
<comment type="function">
    <text evidence="1">Catalyzes the base-exchange of a guanine (G) residue with the queuine precursor 7-aminomethyl-7-deazaguanine (PreQ1) at position 34 (anticodon wobble position) in tRNAs with GU(N) anticodons (tRNA-Asp, -Asn, -His and -Tyr). Catalysis occurs through a double-displacement mechanism. The nucleophile active site attacks the C1' of nucleotide 34 to detach the guanine base from the RNA, forming a covalent enzyme-RNA intermediate. The proton acceptor active site deprotonates the incoming PreQ1, allowing a nucleophilic attack on the C1' of the ribose to form the product. After dissociation, two additional enzymatic reactions on the tRNA convert PreQ1 to queuine (Q), resulting in the hypermodified nucleoside queuosine (7-(((4,5-cis-dihydroxy-2-cyclopenten-1-yl)amino)methyl)-7-deazaguanosine).</text>
</comment>
<comment type="catalytic activity">
    <reaction evidence="1">
        <text>7-aminomethyl-7-carbaguanine + guanosine(34) in tRNA = 7-aminomethyl-7-carbaguanosine(34) in tRNA + guanine</text>
        <dbReference type="Rhea" id="RHEA:24104"/>
        <dbReference type="Rhea" id="RHEA-COMP:10341"/>
        <dbReference type="Rhea" id="RHEA-COMP:10342"/>
        <dbReference type="ChEBI" id="CHEBI:16235"/>
        <dbReference type="ChEBI" id="CHEBI:58703"/>
        <dbReference type="ChEBI" id="CHEBI:74269"/>
        <dbReference type="ChEBI" id="CHEBI:82833"/>
        <dbReference type="EC" id="2.4.2.29"/>
    </reaction>
</comment>
<comment type="cofactor">
    <cofactor evidence="1">
        <name>Zn(2+)</name>
        <dbReference type="ChEBI" id="CHEBI:29105"/>
    </cofactor>
    <text evidence="1">Binds 1 zinc ion per subunit.</text>
</comment>
<comment type="pathway">
    <text evidence="1">tRNA modification; tRNA-queuosine biosynthesis.</text>
</comment>
<comment type="subunit">
    <text evidence="1">Homodimer. Within each dimer, one monomer is responsible for RNA recognition and catalysis, while the other monomer binds to the replacement base PreQ1.</text>
</comment>
<comment type="similarity">
    <text evidence="1">Belongs to the queuine tRNA-ribosyltransferase family.</text>
</comment>
<sequence length="380" mass="43075">MTDYPIKYRLIKKEKHTGARLGEIITPHGTFPTPMFMPVGTQATVKTQSPEELKAMGSGIILSNTYHLWLRPGDELIAKAGGLHKFMNWDQPILTDSGGFQVYSLADSRNITEEGVTFKNHLNGSKMFLSPEKAISIQNNLGSDIMMSFDECPQFYQPYDYVKKSIERTSRWAERGLKAHRRPHDQGLFGIVQGAGFEDLRRQSAADLVSMDFPGYSVGGLAVGESHEEMNAVLDFTTPLLPENKPRYLMGVGAPDSLIDGVIRGIDMFDCVLPTRIARNGTCMTSEGRLVVKNAKFAEDFTPLDHDCDCYTCQNYTRAYIRHLLKADETFGIRLTSYHNLYFLVNLMKKVRQAIMDDNLLEFREDFLERYGYNTSNRNF</sequence>
<accession>B9DVZ9</accession>
<organism>
    <name type="scientific">Streptococcus uberis (strain ATCC BAA-854 / 0140J)</name>
    <dbReference type="NCBI Taxonomy" id="218495"/>
    <lineage>
        <taxon>Bacteria</taxon>
        <taxon>Bacillati</taxon>
        <taxon>Bacillota</taxon>
        <taxon>Bacilli</taxon>
        <taxon>Lactobacillales</taxon>
        <taxon>Streptococcaceae</taxon>
        <taxon>Streptococcus</taxon>
    </lineage>
</organism>
<reference key="1">
    <citation type="journal article" date="2009" name="BMC Genomics">
        <title>Evidence for niche adaptation in the genome of the bovine pathogen Streptococcus uberis.</title>
        <authorList>
            <person name="Ward P.N."/>
            <person name="Holden M.T.G."/>
            <person name="Leigh J.A."/>
            <person name="Lennard N."/>
            <person name="Bignell A."/>
            <person name="Barron A."/>
            <person name="Clark L."/>
            <person name="Quail M.A."/>
            <person name="Woodward J."/>
            <person name="Barrell B.G."/>
            <person name="Egan S.A."/>
            <person name="Field T.R."/>
            <person name="Maskell D."/>
            <person name="Kehoe M."/>
            <person name="Dowson C.G."/>
            <person name="Chanter N."/>
            <person name="Whatmore A.M."/>
            <person name="Bentley S.D."/>
            <person name="Parkhill J."/>
        </authorList>
    </citation>
    <scope>NUCLEOTIDE SEQUENCE [LARGE SCALE GENOMIC DNA]</scope>
    <source>
        <strain>ATCC BAA-854 / 0140J</strain>
    </source>
</reference>
<feature type="chain" id="PRO_1000198031" description="Queuine tRNA-ribosyltransferase">
    <location>
        <begin position="1"/>
        <end position="380"/>
    </location>
</feature>
<feature type="region of interest" description="RNA binding" evidence="1">
    <location>
        <begin position="251"/>
        <end position="257"/>
    </location>
</feature>
<feature type="region of interest" description="RNA binding; important for wobble base 34 recognition" evidence="1">
    <location>
        <begin position="275"/>
        <end position="279"/>
    </location>
</feature>
<feature type="active site" description="Proton acceptor" evidence="1">
    <location>
        <position position="96"/>
    </location>
</feature>
<feature type="active site" description="Nucleophile" evidence="1">
    <location>
        <position position="270"/>
    </location>
</feature>
<feature type="binding site" evidence="1">
    <location>
        <begin position="96"/>
        <end position="100"/>
    </location>
    <ligand>
        <name>substrate</name>
    </ligand>
</feature>
<feature type="binding site" evidence="1">
    <location>
        <position position="150"/>
    </location>
    <ligand>
        <name>substrate</name>
    </ligand>
</feature>
<feature type="binding site" evidence="1">
    <location>
        <position position="193"/>
    </location>
    <ligand>
        <name>substrate</name>
    </ligand>
</feature>
<feature type="binding site" evidence="1">
    <location>
        <position position="220"/>
    </location>
    <ligand>
        <name>substrate</name>
    </ligand>
</feature>
<feature type="binding site" evidence="1">
    <location>
        <position position="308"/>
    </location>
    <ligand>
        <name>Zn(2+)</name>
        <dbReference type="ChEBI" id="CHEBI:29105"/>
    </ligand>
</feature>
<feature type="binding site" evidence="1">
    <location>
        <position position="310"/>
    </location>
    <ligand>
        <name>Zn(2+)</name>
        <dbReference type="ChEBI" id="CHEBI:29105"/>
    </ligand>
</feature>
<feature type="binding site" evidence="1">
    <location>
        <position position="313"/>
    </location>
    <ligand>
        <name>Zn(2+)</name>
        <dbReference type="ChEBI" id="CHEBI:29105"/>
    </ligand>
</feature>
<feature type="binding site" evidence="1">
    <location>
        <position position="339"/>
    </location>
    <ligand>
        <name>Zn(2+)</name>
        <dbReference type="ChEBI" id="CHEBI:29105"/>
    </ligand>
</feature>